<comment type="function">
    <text evidence="1">Component of the origin recognition complex (ORC) that binds origins of replication. DNA-binding is ATP-dependent. The specific DNA sequences that define origins of replication have not been identified yet. ORC is required to assemble the pre-replication complex necessary to initiate DNA replication.</text>
</comment>
<comment type="subunit">
    <text evidence="2 4">Component of the origin recognition complex (ORC) composed of at least ORC1 (ORC1A or ORC1B), ORC2, ORC3, ORC4, ORC5 and ORC6. ORC is regulated in a cell-cycle and development dependent manner. It is sequentially assembled at the exit from anaphase of mitosis and disassembled as cells enter S phase. Interacts directly with ORC2, ORC3, ORC4 and ORC5.</text>
</comment>
<comment type="interaction">
    <interactant intactId="EBI-2114077">
        <id>Q9ZVH3</id>
    </interactant>
    <interactant intactId="EBI-2114089">
        <id>Q38899</id>
        <label>ORC2</label>
    </interactant>
    <organismsDiffer>false</organismsDiffer>
    <experiments>2</experiments>
</comment>
<comment type="interaction">
    <interactant intactId="EBI-2114077">
        <id>Q9ZVH3</id>
    </interactant>
    <interactant intactId="EBI-2114176">
        <id>Q6EWX1</id>
        <label>ORC4</label>
    </interactant>
    <organismsDiffer>false</organismsDiffer>
    <experiments>2</experiments>
</comment>
<comment type="interaction">
    <interactant intactId="EBI-2114077">
        <id>Q9ZVH3</id>
    </interactant>
    <interactant intactId="EBI-2114109">
        <id>Q6EWX0</id>
        <label>ORC5</label>
    </interactant>
    <organismsDiffer>false</organismsDiffer>
    <experiments>2</experiments>
</comment>
<comment type="subcellular location">
    <subcellularLocation>
        <location evidence="1">Nucleus</location>
    </subcellularLocation>
</comment>
<comment type="tissue specificity">
    <text evidence="2 4">Follow a cell-cycle regulation with a peak at the G1/S-phase (PubMed:16179646). Mostly expressed in siliques, flowers, flower buds and mature leaves, and, to a lower exent, in roots, leaves and stems (PubMed:15358564, PubMed:16179646).</text>
</comment>
<comment type="induction">
    <text evidence="2 3 4">Regulated by E2F (PubMed:16126853, PubMed:16179646). Accumulates rapidly after cell cycle reactivation by sucrose addition following cell cycle arrest mediated by sucrose deprivation (PubMed:15358564, PubMed:16179646).</text>
</comment>
<comment type="similarity">
    <text evidence="6">Belongs to the ORC6 family.</text>
</comment>
<comment type="sequence caution" evidence="6">
    <conflict type="erroneous gene model prediction">
        <sequence resource="EMBL-CDS" id="AAD14490"/>
    </conflict>
</comment>
<evidence type="ECO:0000250" key="1">
    <source>
        <dbReference type="UniProtKB" id="Q9Y5N6"/>
    </source>
</evidence>
<evidence type="ECO:0000269" key="2">
    <source>
    </source>
</evidence>
<evidence type="ECO:0000269" key="3">
    <source>
    </source>
</evidence>
<evidence type="ECO:0000269" key="4">
    <source>
    </source>
</evidence>
<evidence type="ECO:0000303" key="5">
    <source>
    </source>
</evidence>
<evidence type="ECO:0000305" key="6"/>
<evidence type="ECO:0000312" key="7">
    <source>
        <dbReference type="Araport" id="AT1G26840"/>
    </source>
</evidence>
<evidence type="ECO:0000312" key="8">
    <source>
        <dbReference type="EMBL" id="AAD14490.1"/>
    </source>
</evidence>
<sequence length="284" mass="31770">MDISDIGRKLSLDNNKLLIRKAAEIRRLCDAQFDSSIIGVGEICKAVICLEIAATRLQIIFDRQAAVKLSGMSEKAYSRSFNSLQNVIGIKIKLNVRELAVQFGCVRVIKSVQNVLSSYKERFLASLPASRRANADFTRPVFTAAAFYLCAKKQKLKVDKLRLIEVCGTSESEFSCVSTSMTDLCFDCVGISKEKKDAKDVKGNRDLLDVLPGKRRLEDGGYSSGDESSCYKRHKKMEEAKYEDWKSTVVNSIKKNPEKGTKRVIQASLNFPKKSETKELQVDS</sequence>
<organism>
    <name type="scientific">Arabidopsis thaliana</name>
    <name type="common">Mouse-ear cress</name>
    <dbReference type="NCBI Taxonomy" id="3702"/>
    <lineage>
        <taxon>Eukaryota</taxon>
        <taxon>Viridiplantae</taxon>
        <taxon>Streptophyta</taxon>
        <taxon>Embryophyta</taxon>
        <taxon>Tracheophyta</taxon>
        <taxon>Spermatophyta</taxon>
        <taxon>Magnoliopsida</taxon>
        <taxon>eudicotyledons</taxon>
        <taxon>Gunneridae</taxon>
        <taxon>Pentapetalae</taxon>
        <taxon>rosids</taxon>
        <taxon>malvids</taxon>
        <taxon>Brassicales</taxon>
        <taxon>Brassicaceae</taxon>
        <taxon>Camelineae</taxon>
        <taxon>Arabidopsis</taxon>
    </lineage>
</organism>
<accession>Q9ZVH3</accession>
<accession>Q6EWW9</accession>
<dbReference type="EMBL" id="AJ575584">
    <property type="protein sequence ID" value="CAE01430.1"/>
    <property type="molecule type" value="mRNA"/>
</dbReference>
<dbReference type="EMBL" id="AC005508">
    <property type="protein sequence ID" value="AAD14490.1"/>
    <property type="status" value="ALT_SEQ"/>
    <property type="molecule type" value="Genomic_DNA"/>
</dbReference>
<dbReference type="EMBL" id="CP002684">
    <property type="protein sequence ID" value="AEE30748.1"/>
    <property type="molecule type" value="Genomic_DNA"/>
</dbReference>
<dbReference type="PIR" id="B86395">
    <property type="entry name" value="B86395"/>
</dbReference>
<dbReference type="RefSeq" id="NP_174006.2">
    <property type="nucleotide sequence ID" value="NM_102448.4"/>
</dbReference>
<dbReference type="SMR" id="Q9ZVH3"/>
<dbReference type="FunCoup" id="Q9ZVH3">
    <property type="interactions" value="1659"/>
</dbReference>
<dbReference type="IntAct" id="Q9ZVH3">
    <property type="interactions" value="5"/>
</dbReference>
<dbReference type="STRING" id="3702.Q9ZVH3"/>
<dbReference type="PaxDb" id="3702-AT1G26840.1"/>
<dbReference type="EnsemblPlants" id="AT1G26840.1">
    <property type="protein sequence ID" value="AT1G26840.1"/>
    <property type="gene ID" value="AT1G26840"/>
</dbReference>
<dbReference type="GeneID" id="839227"/>
<dbReference type="Gramene" id="AT1G26840.1">
    <property type="protein sequence ID" value="AT1G26840.1"/>
    <property type="gene ID" value="AT1G26840"/>
</dbReference>
<dbReference type="KEGG" id="ath:AT1G26840"/>
<dbReference type="Araport" id="AT1G26840"/>
<dbReference type="TAIR" id="AT1G26840">
    <property type="gene designation" value="ORC6"/>
</dbReference>
<dbReference type="eggNOG" id="KOG4557">
    <property type="taxonomic scope" value="Eukaryota"/>
</dbReference>
<dbReference type="HOGENOM" id="CLU_080569_0_0_1"/>
<dbReference type="InParanoid" id="Q9ZVH3"/>
<dbReference type="OMA" id="RKSHYLN"/>
<dbReference type="PhylomeDB" id="Q9ZVH3"/>
<dbReference type="PRO" id="PR:Q9ZVH3"/>
<dbReference type="Proteomes" id="UP000006548">
    <property type="component" value="Chromosome 1"/>
</dbReference>
<dbReference type="ExpressionAtlas" id="Q9ZVH3">
    <property type="expression patterns" value="baseline and differential"/>
</dbReference>
<dbReference type="GO" id="GO:0005664">
    <property type="term" value="C:nuclear origin of replication recognition complex"/>
    <property type="evidence" value="ECO:0007669"/>
    <property type="project" value="InterPro"/>
</dbReference>
<dbReference type="GO" id="GO:0000808">
    <property type="term" value="C:origin recognition complex"/>
    <property type="evidence" value="ECO:0000250"/>
    <property type="project" value="TAIR"/>
</dbReference>
<dbReference type="GO" id="GO:0003677">
    <property type="term" value="F:DNA binding"/>
    <property type="evidence" value="ECO:0007669"/>
    <property type="project" value="UniProtKB-KW"/>
</dbReference>
<dbReference type="GO" id="GO:0006260">
    <property type="term" value="P:DNA replication"/>
    <property type="evidence" value="ECO:0000250"/>
    <property type="project" value="TAIR"/>
</dbReference>
<dbReference type="GO" id="GO:0009555">
    <property type="term" value="P:pollen development"/>
    <property type="evidence" value="ECO:0000315"/>
    <property type="project" value="TAIR"/>
</dbReference>
<dbReference type="CDD" id="cd11583">
    <property type="entry name" value="Orc6_mid"/>
    <property type="match status" value="1"/>
</dbReference>
<dbReference type="FunFam" id="1.10.472.10:FF:000062">
    <property type="entry name" value="Origin recognition complex subunit 6"/>
    <property type="match status" value="1"/>
</dbReference>
<dbReference type="Gene3D" id="1.10.472.10">
    <property type="entry name" value="Cyclin-like"/>
    <property type="match status" value="1"/>
</dbReference>
<dbReference type="InterPro" id="IPR054113">
    <property type="entry name" value="ORC6_cyclin-like_2nd"/>
</dbReference>
<dbReference type="InterPro" id="IPR008721">
    <property type="entry name" value="ORC6_cyclin_first"/>
</dbReference>
<dbReference type="InterPro" id="IPR020529">
    <property type="entry name" value="ORC6_met/pln"/>
</dbReference>
<dbReference type="PANTHER" id="PTHR13394">
    <property type="entry name" value="ORIGIN RECOGNITION COMPLEX SUBUNIT 6"/>
    <property type="match status" value="1"/>
</dbReference>
<dbReference type="PANTHER" id="PTHR13394:SF0">
    <property type="entry name" value="ORIGIN RECOGNITION COMPLEX SUBUNIT 6"/>
    <property type="match status" value="1"/>
</dbReference>
<dbReference type="Pfam" id="PF05460">
    <property type="entry name" value="ORC6"/>
    <property type="match status" value="1"/>
</dbReference>
<dbReference type="Pfam" id="PF21913">
    <property type="entry name" value="ORC6_2nd"/>
    <property type="match status" value="1"/>
</dbReference>
<feature type="chain" id="PRO_0000127100" description="Origin of replication complex subunit 6">
    <location>
        <begin position="1"/>
        <end position="284"/>
    </location>
</feature>
<proteinExistence type="evidence at protein level"/>
<protein>
    <recommendedName>
        <fullName evidence="5">Origin of replication complex subunit 6</fullName>
        <shortName evidence="5">AtORC6</shortName>
    </recommendedName>
</protein>
<name>ORC6_ARATH</name>
<reference key="1">
    <citation type="journal article" date="2005" name="Nucleic Acids Res.">
        <title>The genes encoding Arabidopsis ORC subunits are E2F targets and the two ORC1 genes are differently expressed in proliferating and endoreplicating cells.</title>
        <authorList>
            <person name="Diaz-Trivino S."/>
            <person name="Castellano M.M."/>
            <person name="Sanchez M.P."/>
            <person name="Ramirez-Parra E."/>
            <person name="Desvoyes B."/>
            <person name="Gutierrez C."/>
        </authorList>
    </citation>
    <scope>NUCLEOTIDE SEQUENCE [MRNA]</scope>
    <scope>SUBUNIT</scope>
    <scope>INTERACTION WITH ORC2; ORC3; ORC4 AND ORC5</scope>
    <scope>TISSUE SPECIFICITY</scope>
    <scope>INDUCTION BY E2F AND SUCROSE</scope>
    <scope>GENE FAMILY</scope>
    <scope>NOMENCLATURE</scope>
</reference>
<reference key="2">
    <citation type="journal article" date="2000" name="Nature">
        <title>Sequence and analysis of chromosome 1 of the plant Arabidopsis thaliana.</title>
        <authorList>
            <person name="Theologis A."/>
            <person name="Ecker J.R."/>
            <person name="Palm C.J."/>
            <person name="Federspiel N.A."/>
            <person name="Kaul S."/>
            <person name="White O."/>
            <person name="Alonso J."/>
            <person name="Altafi H."/>
            <person name="Araujo R."/>
            <person name="Bowman C.L."/>
            <person name="Brooks S.Y."/>
            <person name="Buehler E."/>
            <person name="Chan A."/>
            <person name="Chao Q."/>
            <person name="Chen H."/>
            <person name="Cheuk R.F."/>
            <person name="Chin C.W."/>
            <person name="Chung M.K."/>
            <person name="Conn L."/>
            <person name="Conway A.B."/>
            <person name="Conway A.R."/>
            <person name="Creasy T.H."/>
            <person name="Dewar K."/>
            <person name="Dunn P."/>
            <person name="Etgu P."/>
            <person name="Feldblyum T.V."/>
            <person name="Feng J.-D."/>
            <person name="Fong B."/>
            <person name="Fujii C.Y."/>
            <person name="Gill J.E."/>
            <person name="Goldsmith A.D."/>
            <person name="Haas B."/>
            <person name="Hansen N.F."/>
            <person name="Hughes B."/>
            <person name="Huizar L."/>
            <person name="Hunter J.L."/>
            <person name="Jenkins J."/>
            <person name="Johnson-Hopson C."/>
            <person name="Khan S."/>
            <person name="Khaykin E."/>
            <person name="Kim C.J."/>
            <person name="Koo H.L."/>
            <person name="Kremenetskaia I."/>
            <person name="Kurtz D.B."/>
            <person name="Kwan A."/>
            <person name="Lam B."/>
            <person name="Langin-Hooper S."/>
            <person name="Lee A."/>
            <person name="Lee J.M."/>
            <person name="Lenz C.A."/>
            <person name="Li J.H."/>
            <person name="Li Y.-P."/>
            <person name="Lin X."/>
            <person name="Liu S.X."/>
            <person name="Liu Z.A."/>
            <person name="Luros J.S."/>
            <person name="Maiti R."/>
            <person name="Marziali A."/>
            <person name="Militscher J."/>
            <person name="Miranda M."/>
            <person name="Nguyen M."/>
            <person name="Nierman W.C."/>
            <person name="Osborne B.I."/>
            <person name="Pai G."/>
            <person name="Peterson J."/>
            <person name="Pham P.K."/>
            <person name="Rizzo M."/>
            <person name="Rooney T."/>
            <person name="Rowley D."/>
            <person name="Sakano H."/>
            <person name="Salzberg S.L."/>
            <person name="Schwartz J.R."/>
            <person name="Shinn P."/>
            <person name="Southwick A.M."/>
            <person name="Sun H."/>
            <person name="Tallon L.J."/>
            <person name="Tambunga G."/>
            <person name="Toriumi M.J."/>
            <person name="Town C.D."/>
            <person name="Utterback T."/>
            <person name="Van Aken S."/>
            <person name="Vaysberg M."/>
            <person name="Vysotskaia V.S."/>
            <person name="Walker M."/>
            <person name="Wu D."/>
            <person name="Yu G."/>
            <person name="Fraser C.M."/>
            <person name="Venter J.C."/>
            <person name="Davis R.W."/>
        </authorList>
    </citation>
    <scope>NUCLEOTIDE SEQUENCE [LARGE SCALE GENOMIC DNA]</scope>
    <source>
        <strain>cv. Columbia</strain>
    </source>
</reference>
<reference key="3">
    <citation type="journal article" date="2017" name="Plant J.">
        <title>Araport11: a complete reannotation of the Arabidopsis thaliana reference genome.</title>
        <authorList>
            <person name="Cheng C.Y."/>
            <person name="Krishnakumar V."/>
            <person name="Chan A.P."/>
            <person name="Thibaud-Nissen F."/>
            <person name="Schobel S."/>
            <person name="Town C.D."/>
        </authorList>
    </citation>
    <scope>GENOME REANNOTATION</scope>
    <source>
        <strain>cv. Columbia</strain>
    </source>
</reference>
<reference key="4">
    <citation type="journal article" date="2004" name="FEBS Lett.">
        <title>Genome based identification and analysis of the pre-replicative complex of Arabidopsis thaliana.</title>
        <authorList>
            <person name="Masuda H.P."/>
            <person name="Ramos G.B.A."/>
            <person name="de Almeida-Engler J."/>
            <person name="Cabral L.M."/>
            <person name="Coqueiro V.M."/>
            <person name="Macrini C.M.T."/>
            <person name="Ferreira P.C.G."/>
            <person name="Hemerly A.S."/>
        </authorList>
    </citation>
    <scope>SUBUNIT</scope>
    <scope>INTERACTION WITH ORC3</scope>
    <scope>TISSUE SPECIFICITY</scope>
    <scope>INDUCTION BY SUCROSE</scope>
    <scope>GENE FAMILY</scope>
    <source>
        <strain>cv. Columbia</strain>
    </source>
</reference>
<reference key="5">
    <citation type="journal article" date="2005" name="Plant Physiol.">
        <title>Genome-wide identification of potential plant E2F target genes.</title>
        <authorList>
            <person name="Vandepoele K."/>
            <person name="Vlieghe K."/>
            <person name="Florquin K."/>
            <person name="Hennig L."/>
            <person name="Beemster G.T.S."/>
            <person name="Gruissem W."/>
            <person name="Van de Peer Y."/>
            <person name="Inze D."/>
            <person name="De Veylder L."/>
        </authorList>
    </citation>
    <scope>INDUCTION BY E2F</scope>
</reference>
<reference key="6">
    <citation type="journal article" date="2007" name="Plant Physiol.">
        <title>Genome-wide analysis of the core DNA replication machinery in the higher plants Arabidopsis and rice.</title>
        <authorList>
            <person name="Shultz R.W."/>
            <person name="Tatineni V.M."/>
            <person name="Hanley-Bowdoin L."/>
            <person name="Thompson W.F."/>
        </authorList>
    </citation>
    <scope>REVIEW ON THE CORE DNA REPLICATION MACHINERY</scope>
</reference>
<keyword id="KW-0235">DNA replication</keyword>
<keyword id="KW-0238">DNA-binding</keyword>
<keyword id="KW-0539">Nucleus</keyword>
<keyword id="KW-1185">Reference proteome</keyword>
<gene>
    <name evidence="5" type="primary">ORC6</name>
    <name evidence="7" type="ordered locus">At1g26840</name>
    <name evidence="8" type="ORF">T2P11.3</name>
</gene>